<sequence>MFQIRNYATKYAQSRALRKYPVGGVFHGYEVKRLLPVPELKLTAVDLLHNQTGSQHLHIDRDDNNNVFSIGFKTNPPDSTGVPHILEHTTLCGSHKYPVRDPFFKMLNRSLANFMNAMTGHDYTFYPFATTNETDFANLRDVYLDATLNPLLNQQDFLQEGWRLEHTKVDDPNSDIGFKGVVYNEMKGQVSNANYYFWIKFQESYYPSLNNSGGDPTKMTDLQYEDLISFHRNNYHPSNAKTFTYGNFDLNNTLQRLNKEYQGYGRRGSKKRELLPIQMKEDVSVETEGQVDPMLPPDKQIKTSVTWICGKPEDTYQTFLLKILGNLLLDGHSSPFYQKLIESGLAYDFSVNTGVESQTAANFITIGVQGCDEVDSIYEVINKVWEEVLQNPFEESRIQAIIQQLELSKKDQRADFGLQLLYSVLPGWVNKTDPFDSLLFDETLERFQEDWATKGDNLFKDLIKEFVISKPVFKFTMKGSETFSQKLDAEEQERLERKLKLLDEEDKKVIFERGKQLQELQDLKEDLSCLPSLQISAIPRVSKTYPLLEKDNVLNRITDTNGITYVRGKRLLNHHIPRELYPFLPLYADSLTNLGTSTEEFSTIEEQIKLHTGGVSTRVSVNPDAQTGKPMLLFQVDGWALNSKTDHIFKFWKKLLCETDFHKHKEKLKVLIRSLASSNTASVAETGHAFARNFGAAHLSVTKAINESLNGIEQLQLINKLSQCLDDEALFEKEVVSKLVELQSYINGSSDMKFMITSDSQVQIDAVHQQITGFLSSLPKDSKPCDFYSENYSMLENPGKPTLLQFPFQVHYTAKCYPGVSYTHPDGAKLQILSNMLTHKYLHREIREKGGAYGGGATYSALDGTFSFYSYRDPHALNSLSTFDSVPEFILNKSSWGEPDLNEAKLSVFQQVDSPMSAKNEGTILFHYDVTDEMKQRRREQLLDVNLNDIHQVAEEYLKQDKSIASIVGPEIPNFDALVQTV</sequence>
<gene>
    <name type="primary">CYM1</name>
    <name type="ordered locus">KLLA0B00957g</name>
</gene>
<comment type="function">
    <text evidence="1 2">Degrades mitochondrial transit peptides after their cleavage in the intermembrane space or in the matrix, and presequence peptides; clearance of these peptides is required to keep the presequence processing machinery running (By similarity). Preferentially cleaves the N-terminal side of paired basic amino acid residues (By similarity). Also degrades other unstructured peptides (By similarity). May function as an ATP-dependent peptidase as opposed to a metalloendopeptidase (By similarity).</text>
</comment>
<comment type="cofactor">
    <cofactor evidence="3">
        <name>Zn(2+)</name>
        <dbReference type="ChEBI" id="CHEBI:29105"/>
    </cofactor>
    <text evidence="3">Binds 1 zinc ion per subunit.</text>
</comment>
<comment type="subunit">
    <text evidence="3">Monomer and homodimer; homodimerization is induced by binding of the substrate.</text>
</comment>
<comment type="subcellular location">
    <subcellularLocation>
        <location evidence="2">Mitochondrion intermembrane space</location>
    </subcellularLocation>
    <subcellularLocation>
        <location evidence="2">Mitochondrion matrix</location>
    </subcellularLocation>
</comment>
<comment type="similarity">
    <text evidence="6">Belongs to the peptidase M16 family. PreP subfamily.</text>
</comment>
<organism>
    <name type="scientific">Kluyveromyces lactis (strain ATCC 8585 / CBS 2359 / DSM 70799 / NBRC 1267 / NRRL Y-1140 / WM37)</name>
    <name type="common">Yeast</name>
    <name type="synonym">Candida sphaerica</name>
    <dbReference type="NCBI Taxonomy" id="284590"/>
    <lineage>
        <taxon>Eukaryota</taxon>
        <taxon>Fungi</taxon>
        <taxon>Dikarya</taxon>
        <taxon>Ascomycota</taxon>
        <taxon>Saccharomycotina</taxon>
        <taxon>Saccharomycetes</taxon>
        <taxon>Saccharomycetales</taxon>
        <taxon>Saccharomycetaceae</taxon>
        <taxon>Kluyveromyces</taxon>
    </lineage>
</organism>
<protein>
    <recommendedName>
        <fullName>Presequence protease, mitochondrial</fullName>
        <shortName>PreP</shortName>
        <ecNumber evidence="2">3.4.24.-</ecNumber>
    </recommendedName>
    <alternativeName>
        <fullName>Pitrilysin metalloproteinase</fullName>
    </alternativeName>
</protein>
<evidence type="ECO:0000250" key="1">
    <source>
        <dbReference type="UniProtKB" id="A0A8H8UNX0"/>
    </source>
</evidence>
<evidence type="ECO:0000250" key="2">
    <source>
        <dbReference type="UniProtKB" id="P32898"/>
    </source>
</evidence>
<evidence type="ECO:0000250" key="3">
    <source>
        <dbReference type="UniProtKB" id="Q5JRX3"/>
    </source>
</evidence>
<evidence type="ECO:0000250" key="4">
    <source>
        <dbReference type="UniProtKB" id="Q9LJL3"/>
    </source>
</evidence>
<evidence type="ECO:0000255" key="5"/>
<evidence type="ECO:0000305" key="6"/>
<feature type="transit peptide" description="Mitochondrion" evidence="5">
    <location>
        <begin position="1"/>
        <end position="7"/>
    </location>
</feature>
<feature type="chain" id="PRO_0000249948" description="Presequence protease, mitochondrial">
    <location>
        <begin position="8"/>
        <end position="982"/>
    </location>
</feature>
<feature type="active site" description="Proton acceptor" evidence="3">
    <location>
        <position position="87"/>
    </location>
</feature>
<feature type="active site" evidence="4">
    <location>
        <position position="160"/>
    </location>
</feature>
<feature type="binding site" evidence="3">
    <location>
        <position position="84"/>
    </location>
    <ligand>
        <name>Zn(2+)</name>
        <dbReference type="ChEBI" id="CHEBI:29105"/>
        <note>catalytic</note>
    </ligand>
</feature>
<feature type="binding site" evidence="3">
    <location>
        <position position="88"/>
    </location>
    <ligand>
        <name>Zn(2+)</name>
        <dbReference type="ChEBI" id="CHEBI:29105"/>
        <note>catalytic</note>
    </ligand>
</feature>
<feature type="binding site" evidence="3">
    <location>
        <position position="185"/>
    </location>
    <ligand>
        <name>Zn(2+)</name>
        <dbReference type="ChEBI" id="CHEBI:29105"/>
        <note>catalytic</note>
    </ligand>
</feature>
<keyword id="KW-0378">Hydrolase</keyword>
<keyword id="KW-0479">Metal-binding</keyword>
<keyword id="KW-0482">Metalloprotease</keyword>
<keyword id="KW-0496">Mitochondrion</keyword>
<keyword id="KW-0645">Protease</keyword>
<keyword id="KW-1185">Reference proteome</keyword>
<keyword id="KW-0809">Transit peptide</keyword>
<keyword id="KW-0862">Zinc</keyword>
<reference key="1">
    <citation type="journal article" date="2004" name="Nature">
        <title>Genome evolution in yeasts.</title>
        <authorList>
            <person name="Dujon B."/>
            <person name="Sherman D."/>
            <person name="Fischer G."/>
            <person name="Durrens P."/>
            <person name="Casaregola S."/>
            <person name="Lafontaine I."/>
            <person name="de Montigny J."/>
            <person name="Marck C."/>
            <person name="Neuveglise C."/>
            <person name="Talla E."/>
            <person name="Goffard N."/>
            <person name="Frangeul L."/>
            <person name="Aigle M."/>
            <person name="Anthouard V."/>
            <person name="Babour A."/>
            <person name="Barbe V."/>
            <person name="Barnay S."/>
            <person name="Blanchin S."/>
            <person name="Beckerich J.-M."/>
            <person name="Beyne E."/>
            <person name="Bleykasten C."/>
            <person name="Boisrame A."/>
            <person name="Boyer J."/>
            <person name="Cattolico L."/>
            <person name="Confanioleri F."/>
            <person name="de Daruvar A."/>
            <person name="Despons L."/>
            <person name="Fabre E."/>
            <person name="Fairhead C."/>
            <person name="Ferry-Dumazet H."/>
            <person name="Groppi A."/>
            <person name="Hantraye F."/>
            <person name="Hennequin C."/>
            <person name="Jauniaux N."/>
            <person name="Joyet P."/>
            <person name="Kachouri R."/>
            <person name="Kerrest A."/>
            <person name="Koszul R."/>
            <person name="Lemaire M."/>
            <person name="Lesur I."/>
            <person name="Ma L."/>
            <person name="Muller H."/>
            <person name="Nicaud J.-M."/>
            <person name="Nikolski M."/>
            <person name="Oztas S."/>
            <person name="Ozier-Kalogeropoulos O."/>
            <person name="Pellenz S."/>
            <person name="Potier S."/>
            <person name="Richard G.-F."/>
            <person name="Straub M.-L."/>
            <person name="Suleau A."/>
            <person name="Swennen D."/>
            <person name="Tekaia F."/>
            <person name="Wesolowski-Louvel M."/>
            <person name="Westhof E."/>
            <person name="Wirth B."/>
            <person name="Zeniou-Meyer M."/>
            <person name="Zivanovic Y."/>
            <person name="Bolotin-Fukuhara M."/>
            <person name="Thierry A."/>
            <person name="Bouchier C."/>
            <person name="Caudron B."/>
            <person name="Scarpelli C."/>
            <person name="Gaillardin C."/>
            <person name="Weissenbach J."/>
            <person name="Wincker P."/>
            <person name="Souciet J.-L."/>
        </authorList>
    </citation>
    <scope>NUCLEOTIDE SEQUENCE [LARGE SCALE GENOMIC DNA]</scope>
    <source>
        <strain>ATCC 8585 / CBS 2359 / DSM 70799 / NBRC 1267 / NRRL Y-1140 / WM37</strain>
    </source>
</reference>
<dbReference type="EC" id="3.4.24.-" evidence="2"/>
<dbReference type="EMBL" id="CR382122">
    <property type="protein sequence ID" value="CAH01966.1"/>
    <property type="molecule type" value="Genomic_DNA"/>
</dbReference>
<dbReference type="RefSeq" id="XP_451573.1">
    <property type="nucleotide sequence ID" value="XM_451573.1"/>
</dbReference>
<dbReference type="SMR" id="Q6CWW6"/>
<dbReference type="FunCoup" id="Q6CWW6">
    <property type="interactions" value="687"/>
</dbReference>
<dbReference type="STRING" id="284590.Q6CWW6"/>
<dbReference type="MEROPS" id="M16.013"/>
<dbReference type="PaxDb" id="284590-Q6CWW6"/>
<dbReference type="KEGG" id="kla:KLLA0_B00957g"/>
<dbReference type="eggNOG" id="KOG2019">
    <property type="taxonomic scope" value="Eukaryota"/>
</dbReference>
<dbReference type="HOGENOM" id="CLU_009165_0_0_1"/>
<dbReference type="InParanoid" id="Q6CWW6"/>
<dbReference type="OMA" id="FPFQVHY"/>
<dbReference type="Proteomes" id="UP000000598">
    <property type="component" value="Chromosome B"/>
</dbReference>
<dbReference type="GO" id="GO:0005758">
    <property type="term" value="C:mitochondrial intermembrane space"/>
    <property type="evidence" value="ECO:0007669"/>
    <property type="project" value="UniProtKB-SubCell"/>
</dbReference>
<dbReference type="GO" id="GO:0005759">
    <property type="term" value="C:mitochondrial matrix"/>
    <property type="evidence" value="ECO:0007669"/>
    <property type="project" value="UniProtKB-SubCell"/>
</dbReference>
<dbReference type="GO" id="GO:0004222">
    <property type="term" value="F:metalloendopeptidase activity"/>
    <property type="evidence" value="ECO:0007669"/>
    <property type="project" value="TreeGrafter"/>
</dbReference>
<dbReference type="GO" id="GO:0008270">
    <property type="term" value="F:zinc ion binding"/>
    <property type="evidence" value="ECO:0000250"/>
    <property type="project" value="UniProtKB"/>
</dbReference>
<dbReference type="GO" id="GO:0016485">
    <property type="term" value="P:protein processing"/>
    <property type="evidence" value="ECO:0000250"/>
    <property type="project" value="UniProtKB"/>
</dbReference>
<dbReference type="FunFam" id="3.30.830.10:FF:000013">
    <property type="entry name" value="Mitochondrial presequence protease"/>
    <property type="match status" value="1"/>
</dbReference>
<dbReference type="FunFam" id="3.30.830.10:FF:000009">
    <property type="entry name" value="Presequence protease, mitochondrial"/>
    <property type="match status" value="1"/>
</dbReference>
<dbReference type="FunFam" id="3.30.830.10:FF:000011">
    <property type="entry name" value="Presequence protease, mitochondrial"/>
    <property type="match status" value="1"/>
</dbReference>
<dbReference type="Gene3D" id="3.30.830.10">
    <property type="entry name" value="Metalloenzyme, LuxS/M16 peptidase-like"/>
    <property type="match status" value="4"/>
</dbReference>
<dbReference type="InterPro" id="IPR011249">
    <property type="entry name" value="Metalloenz_LuxS/M16"/>
</dbReference>
<dbReference type="InterPro" id="IPR011765">
    <property type="entry name" value="Pept_M16_N"/>
</dbReference>
<dbReference type="InterPro" id="IPR007863">
    <property type="entry name" value="Peptidase_M16_C"/>
</dbReference>
<dbReference type="InterPro" id="IPR013578">
    <property type="entry name" value="Peptidase_M16C_assoc"/>
</dbReference>
<dbReference type="InterPro" id="IPR055130">
    <property type="entry name" value="PreP_C"/>
</dbReference>
<dbReference type="PANTHER" id="PTHR43016">
    <property type="entry name" value="PRESEQUENCE PROTEASE"/>
    <property type="match status" value="1"/>
</dbReference>
<dbReference type="PANTHER" id="PTHR43016:SF13">
    <property type="entry name" value="PRESEQUENCE PROTEASE, MITOCHONDRIAL"/>
    <property type="match status" value="1"/>
</dbReference>
<dbReference type="Pfam" id="PF08367">
    <property type="entry name" value="M16C_assoc"/>
    <property type="match status" value="1"/>
</dbReference>
<dbReference type="Pfam" id="PF00675">
    <property type="entry name" value="Peptidase_M16"/>
    <property type="match status" value="1"/>
</dbReference>
<dbReference type="Pfam" id="PF05193">
    <property type="entry name" value="Peptidase_M16_C"/>
    <property type="match status" value="1"/>
</dbReference>
<dbReference type="Pfam" id="PF22516">
    <property type="entry name" value="PreP_C"/>
    <property type="match status" value="1"/>
</dbReference>
<dbReference type="SMART" id="SM01264">
    <property type="entry name" value="M16C_associated"/>
    <property type="match status" value="1"/>
</dbReference>
<dbReference type="SUPFAM" id="SSF63411">
    <property type="entry name" value="LuxS/MPP-like metallohydrolase"/>
    <property type="match status" value="4"/>
</dbReference>
<proteinExistence type="inferred from homology"/>
<name>PREP_KLULA</name>
<accession>Q6CWW6</accession>